<keyword id="KW-0148">Chlorophyll</keyword>
<keyword id="KW-0157">Chromophore</keyword>
<keyword id="KW-0472">Membrane</keyword>
<keyword id="KW-0602">Photosynthesis</keyword>
<keyword id="KW-0603">Photosystem I</keyword>
<keyword id="KW-0604">Photosystem II</keyword>
<keyword id="KW-1185">Reference proteome</keyword>
<keyword id="KW-0793">Thylakoid</keyword>
<keyword id="KW-0812">Transmembrane</keyword>
<keyword id="KW-1133">Transmembrane helix</keyword>
<proteinExistence type="evidence at protein level"/>
<evidence type="ECO:0000250" key="1"/>
<evidence type="ECO:0000250" key="2">
    <source>
        <dbReference type="UniProtKB" id="Q6Q972"/>
    </source>
</evidence>
<evidence type="ECO:0000255" key="3"/>
<evidence type="ECO:0000269" key="4">
    <source>
    </source>
</evidence>
<evidence type="ECO:0000269" key="5">
    <source>
    </source>
</evidence>
<evidence type="ECO:0000269" key="6">
    <source ref="3"/>
</evidence>
<evidence type="ECO:0000303" key="7">
    <source>
    </source>
</evidence>
<evidence type="ECO:0000303" key="8">
    <source>
    </source>
</evidence>
<evidence type="ECO:0000303" key="9">
    <source>
    </source>
</evidence>
<evidence type="ECO:0000303" key="10">
    <source ref="3"/>
</evidence>
<evidence type="ECO:0000305" key="11"/>
<reference key="1">
    <citation type="journal article" date="2000" name="Proc. Natl. Acad. Sci. U.S.A.">
        <title>Multiplication of antenna genes as a major adaptation to low light in a marine prokaryote.</title>
        <authorList>
            <person name="Garczarek L."/>
            <person name="Hess W.R."/>
            <person name="Holtzendorff J."/>
            <person name="van der Staay G.W.M."/>
            <person name="Partensky F."/>
        </authorList>
    </citation>
    <scope>NUCLEOTIDE SEQUENCE [GENOMIC DNA]</scope>
    <scope>FUNCTION</scope>
    <source>
        <strain>SARG / CCMP1375 / SS120</strain>
    </source>
</reference>
<reference key="2">
    <citation type="journal article" date="2003" name="Proc. Natl. Acad. Sci. U.S.A.">
        <title>Genome sequence of the cyanobacterium Prochlorococcus marinus SS120, a nearly minimal oxyphototrophic genome.</title>
        <authorList>
            <person name="Dufresne A."/>
            <person name="Salanoubat M."/>
            <person name="Partensky F."/>
            <person name="Artiguenave F."/>
            <person name="Axmann I.M."/>
            <person name="Barbe V."/>
            <person name="Duprat S."/>
            <person name="Galperin M.Y."/>
            <person name="Koonin E.V."/>
            <person name="Le Gall F."/>
            <person name="Makarova K.S."/>
            <person name="Ostrowski M."/>
            <person name="Oztas S."/>
            <person name="Robert C."/>
            <person name="Rogozin I.B."/>
            <person name="Scanlan D.J."/>
            <person name="Tandeau de Marsac N."/>
            <person name="Weissenbach J."/>
            <person name="Wincker P."/>
            <person name="Wolf Y.I."/>
            <person name="Hess W.R."/>
        </authorList>
    </citation>
    <scope>NUCLEOTIDE SEQUENCE [LARGE SCALE GENOMIC DNA]</scope>
    <source>
        <strain>SARG / CCMP1375 / SS120</strain>
    </source>
</reference>
<reference key="3">
    <citation type="journal article" date="1997" name="Photosyn. Res.">
        <title>The divinyl-chlorophyll a/b-protein complexes of two strains of the oxyphototrophic marine prokaryote Prochlorococcus -- characterization and response to changes in growth irradiance.</title>
        <authorList>
            <person name="Partensky F."/>
            <person name="La Roche J."/>
            <person name="Wyman K."/>
            <person name="Falkowski P.G."/>
        </authorList>
    </citation>
    <scope>FUNCTION</scope>
    <scope>COFACTOR</scope>
    <scope>SUBUNIT</scope>
    <scope>SUBCELLULAR LOCATION</scope>
    <source>
        <strain>SARG / CCMP1375 / SS120</strain>
    </source>
</reference>
<reference key="4">
    <citation type="journal article" date="2001" name="Plant Mol. Biol.">
        <title>Expression and phylogeny of the multiple antenna genes of the low-light-adapted strain Prochlorococcus marinus SS120 (Oxyphotobacteria).</title>
        <authorList>
            <person name="Garczarek L."/>
            <person name="van der Staay G.W.M."/>
            <person name="Hess W.R."/>
            <person name="Le Gall F."/>
            <person name="Partensky F."/>
        </authorList>
    </citation>
    <scope>INDUCTION</scope>
    <source>
        <strain>SARG / CCMP1375 / SS120</strain>
    </source>
</reference>
<reference key="5">
    <citation type="journal article" date="2003" name="Nature">
        <title>Low-light-adapted Prochlorococcus species possess specific antennae for each photosystem.</title>
        <authorList>
            <person name="Bibby T.S."/>
            <person name="Mary I."/>
            <person name="Nield J."/>
            <person name="Partensky F."/>
            <person name="Barber J."/>
        </authorList>
    </citation>
    <scope>INDUCTION UNDER IRON-STARVATION</scope>
    <source>
        <strain>SARG / CCMP1375 / SS120</strain>
    </source>
</reference>
<feature type="chain" id="PRO_0000077540" description="Divinyl chlorophyll a/b light-harvesting protein PcbC">
    <location>
        <begin position="1"/>
        <end position="351"/>
    </location>
</feature>
<feature type="transmembrane region" description="Helical" evidence="3">
    <location>
        <begin position="27"/>
        <end position="47"/>
    </location>
</feature>
<feature type="transmembrane region" description="Helical" evidence="3">
    <location>
        <begin position="64"/>
        <end position="84"/>
    </location>
</feature>
<feature type="transmembrane region" description="Helical" evidence="3">
    <location>
        <begin position="89"/>
        <end position="109"/>
    </location>
</feature>
<feature type="transmembrane region" description="Helical" evidence="3">
    <location>
        <begin position="203"/>
        <end position="223"/>
    </location>
</feature>
<feature type="transmembrane region" description="Helical" evidence="3">
    <location>
        <begin position="244"/>
        <end position="264"/>
    </location>
</feature>
<feature type="transmembrane region" description="Helical" evidence="3">
    <location>
        <begin position="306"/>
        <end position="326"/>
    </location>
</feature>
<feature type="sequence conflict" description="In Ref. 1; AAF61303." evidence="11" ref="1">
    <original>MQT</original>
    <variation>RAD</variation>
    <location>
        <begin position="1"/>
        <end position="3"/>
    </location>
</feature>
<feature type="sequence conflict" description="In Ref. 1; AAF61303." evidence="11" ref="1">
    <original>ITAG</original>
    <variation>SQLV</variation>
    <location>
        <begin position="348"/>
        <end position="351"/>
    </location>
</feature>
<accession>Q7VC57</accession>
<accession>Q9L8M3</accession>
<name>PCBC_PROMA</name>
<protein>
    <recommendedName>
        <fullName>Divinyl chlorophyll a/b light-harvesting protein PcbC</fullName>
    </recommendedName>
</protein>
<dbReference type="EMBL" id="AE017126">
    <property type="protein sequence ID" value="AAP99929.1"/>
    <property type="molecule type" value="Genomic_DNA"/>
</dbReference>
<dbReference type="EMBL" id="AF198528">
    <property type="protein sequence ID" value="AAF61303.1"/>
    <property type="molecule type" value="Genomic_DNA"/>
</dbReference>
<dbReference type="RefSeq" id="NP_875277.1">
    <property type="nucleotide sequence ID" value="NC_005042.1"/>
</dbReference>
<dbReference type="RefSeq" id="WP_011125037.1">
    <property type="nucleotide sequence ID" value="NC_005042.1"/>
</dbReference>
<dbReference type="SMR" id="Q7VC57"/>
<dbReference type="STRING" id="167539.Pro_0885"/>
<dbReference type="EnsemblBacteria" id="AAP99929">
    <property type="protein sequence ID" value="AAP99929"/>
    <property type="gene ID" value="Pro_0885"/>
</dbReference>
<dbReference type="KEGG" id="pma:Pro_0885"/>
<dbReference type="PATRIC" id="fig|167539.5.peg.934"/>
<dbReference type="eggNOG" id="ENOG5033QV9">
    <property type="taxonomic scope" value="Bacteria"/>
</dbReference>
<dbReference type="HOGENOM" id="CLU_028310_0_0_3"/>
<dbReference type="OrthoDB" id="9429529at2"/>
<dbReference type="Proteomes" id="UP000001420">
    <property type="component" value="Chromosome"/>
</dbReference>
<dbReference type="GO" id="GO:0009522">
    <property type="term" value="C:photosystem I"/>
    <property type="evidence" value="ECO:0007669"/>
    <property type="project" value="UniProtKB-KW"/>
</dbReference>
<dbReference type="GO" id="GO:0009523">
    <property type="term" value="C:photosystem II"/>
    <property type="evidence" value="ECO:0007669"/>
    <property type="project" value="UniProtKB-KW"/>
</dbReference>
<dbReference type="GO" id="GO:0031676">
    <property type="term" value="C:plasma membrane-derived thylakoid membrane"/>
    <property type="evidence" value="ECO:0007669"/>
    <property type="project" value="UniProtKB-SubCell"/>
</dbReference>
<dbReference type="GO" id="GO:0016168">
    <property type="term" value="F:chlorophyll binding"/>
    <property type="evidence" value="ECO:0007669"/>
    <property type="project" value="UniProtKB-KW"/>
</dbReference>
<dbReference type="GO" id="GO:0009767">
    <property type="term" value="P:photosynthetic electron transport chain"/>
    <property type="evidence" value="ECO:0007669"/>
    <property type="project" value="InterPro"/>
</dbReference>
<dbReference type="InterPro" id="IPR000932">
    <property type="entry name" value="PS_antenna-like"/>
</dbReference>
<dbReference type="InterPro" id="IPR036001">
    <property type="entry name" value="PS_II_antenna-like_sf"/>
</dbReference>
<dbReference type="NCBIfam" id="TIGR03041">
    <property type="entry name" value="PS_antenn_a_b"/>
    <property type="match status" value="1"/>
</dbReference>
<dbReference type="Pfam" id="PF00421">
    <property type="entry name" value="PSII"/>
    <property type="match status" value="1"/>
</dbReference>
<dbReference type="SUPFAM" id="SSF161077">
    <property type="entry name" value="Photosystem II antenna protein-like"/>
    <property type="match status" value="1"/>
</dbReference>
<sequence length="351" mass="38591">MQTYGNPNVTYAWYAGNSGTTNRSGKFIAAHAAHAGLMMFWAGAFTLFELARYDSSIPMGNQNLICLPHLAGLGIGGVSNGVITEPYGCTVIAVLHLIFSGVLGAGGLLHSMRYEGDLGNYPEGSRAKKFDFEWDDPDRLTFILGHHLIFLGLGNIQFVEWARIHGIYDSAQGITRTVNYNLDLGMIWNHQADFLTINSLEDVMGGHAFLAFFLIIGGAFHIATKQYGQYTEFKGKGLLSAESVLSYSLAGVAYCAFVAAFWCATNTTIYPTDLYGEVLSLKFEFAPYFVDTADLPADAHTARAWLSNVHFYLGFFFLQGHLWHALRGMGFDFKRVGKAFDNMESAKITAG</sequence>
<organism>
    <name type="scientific">Prochlorococcus marinus (strain SARG / CCMP1375 / SS120)</name>
    <dbReference type="NCBI Taxonomy" id="167539"/>
    <lineage>
        <taxon>Bacteria</taxon>
        <taxon>Bacillati</taxon>
        <taxon>Cyanobacteriota</taxon>
        <taxon>Cyanophyceae</taxon>
        <taxon>Synechococcales</taxon>
        <taxon>Prochlorococcaceae</taxon>
        <taxon>Prochlorococcus</taxon>
    </lineage>
</organism>
<comment type="function">
    <text evidence="2 7 10">The antenna complex functions as a light receptor, it captures and delivers excitation energy to photosystems II and I. The Prochlorales pcb genes are not related to higher plant LHCs.</text>
</comment>
<comment type="cofactor">
    <cofactor evidence="10">
        <name>divinyl chlorophyll a</name>
        <dbReference type="ChEBI" id="CHEBI:73095"/>
    </cofactor>
</comment>
<comment type="cofactor">
    <cofactor evidence="10">
        <name>divinyl chlorophyll b</name>
        <dbReference type="ChEBI" id="CHEBI:73096"/>
    </cofactor>
</comment>
<comment type="subunit">
    <text evidence="6">The antenna complex consists of divinyl chlorophylls (a and b) and divinyl chlorophyll a/b binding proteins and binds more divinyl chlorophyll b than does the antenna complex from high-light-adapted Prochlorococcus.</text>
</comment>
<comment type="subcellular location">
    <subcellularLocation>
        <location evidence="6">Cellular thylakoid membrane</location>
        <topology evidence="1">Multi-pass membrane protein</topology>
    </subcellularLocation>
</comment>
<comment type="induction">
    <text evidence="4 5">This transcript is expressed at a very low level between 4.5 and 72 umol blue light/m2/s. The whole antenna complex is most highly expressed under low light; as the light levels increase antenna complex levels decrease. Thus at least in this strain the amount of antenna complex is controlled mostly at a post-transcriptional level. The transcript is also strongly induced in response to iron-starvation.</text>
</comment>
<comment type="miscellaneous">
    <text evidence="8 9">This low-light-adapted strain contains 8 pcb genes.</text>
</comment>
<comment type="similarity">
    <text evidence="11">Belongs to the PsbB/PsbC family. IsiA/Pcb subfamily.</text>
</comment>
<gene>
    <name type="primary">pcbC</name>
    <name type="ordered locus">Pro_0885</name>
</gene>